<name>TRUD_PECAS</name>
<accession>Q6D1B5</accession>
<reference key="1">
    <citation type="journal article" date="2004" name="Proc. Natl. Acad. Sci. U.S.A.">
        <title>Genome sequence of the enterobacterial phytopathogen Erwinia carotovora subsp. atroseptica and characterization of virulence factors.</title>
        <authorList>
            <person name="Bell K.S."/>
            <person name="Sebaihia M."/>
            <person name="Pritchard L."/>
            <person name="Holden M.T.G."/>
            <person name="Hyman L.J."/>
            <person name="Holeva M.C."/>
            <person name="Thomson N.R."/>
            <person name="Bentley S.D."/>
            <person name="Churcher L.J.C."/>
            <person name="Mungall K."/>
            <person name="Atkin R."/>
            <person name="Bason N."/>
            <person name="Brooks K."/>
            <person name="Chillingworth T."/>
            <person name="Clark K."/>
            <person name="Doggett J."/>
            <person name="Fraser A."/>
            <person name="Hance Z."/>
            <person name="Hauser H."/>
            <person name="Jagels K."/>
            <person name="Moule S."/>
            <person name="Norbertczak H."/>
            <person name="Ormond D."/>
            <person name="Price C."/>
            <person name="Quail M.A."/>
            <person name="Sanders M."/>
            <person name="Walker D."/>
            <person name="Whitehead S."/>
            <person name="Salmond G.P.C."/>
            <person name="Birch P.R.J."/>
            <person name="Parkhill J."/>
            <person name="Toth I.K."/>
        </authorList>
    </citation>
    <scope>NUCLEOTIDE SEQUENCE [LARGE SCALE GENOMIC DNA]</scope>
    <source>
        <strain>SCRI 1043 / ATCC BAA-672</strain>
    </source>
</reference>
<evidence type="ECO:0000255" key="1">
    <source>
        <dbReference type="HAMAP-Rule" id="MF_01082"/>
    </source>
</evidence>
<proteinExistence type="inferred from homology"/>
<sequence length="348" mass="38993">MENSEQLVWLHGEPQATGSLKSTAEDFLVVEDLGFQPDGDGEQVLVRVRKRGCNTQFVAEMLAKFARLPLRAVSYAGLKDRHAVTEQWFCLHMPGKETPDFSSLELEGCDVLEVIRHRRKLRIGTLRGNHFALVLRQVSDRNEVDARLAQIAASGVPNYFGSQRFGRNGNNLEQARLWANNDIRVKERSKRSFYLSASRSAMFNQVASARLAGQQAKTVLCGDALQLTGRGSWFVAKADELETLQVRLDAGELQITAPLPGDDELGTQDDALAFEEQALTGQETLWSLVKRERVEPARRAVLLYPQQMQWEWQDDVTVAVKFWLPAGSFATSVVREVLHSQQDIDIGA</sequence>
<protein>
    <recommendedName>
        <fullName evidence="1">tRNA pseudouridine synthase D</fullName>
        <ecNumber evidence="1">5.4.99.27</ecNumber>
    </recommendedName>
    <alternativeName>
        <fullName evidence="1">tRNA pseudouridine(13) synthase</fullName>
    </alternativeName>
    <alternativeName>
        <fullName evidence="1">tRNA pseudouridylate synthase D</fullName>
    </alternativeName>
    <alternativeName>
        <fullName evidence="1">tRNA-uridine isomerase D</fullName>
    </alternativeName>
</protein>
<gene>
    <name evidence="1" type="primary">truD</name>
    <name type="ordered locus">ECA3533</name>
</gene>
<dbReference type="EC" id="5.4.99.27" evidence="1"/>
<dbReference type="EMBL" id="BX950851">
    <property type="protein sequence ID" value="CAG76431.1"/>
    <property type="molecule type" value="Genomic_DNA"/>
</dbReference>
<dbReference type="RefSeq" id="WP_011095037.1">
    <property type="nucleotide sequence ID" value="NC_004547.2"/>
</dbReference>
<dbReference type="SMR" id="Q6D1B5"/>
<dbReference type="STRING" id="218491.ECA3533"/>
<dbReference type="KEGG" id="eca:ECA3533"/>
<dbReference type="PATRIC" id="fig|218491.5.peg.3579"/>
<dbReference type="eggNOG" id="COG0585">
    <property type="taxonomic scope" value="Bacteria"/>
</dbReference>
<dbReference type="HOGENOM" id="CLU_005281_4_0_6"/>
<dbReference type="OrthoDB" id="1550679at2"/>
<dbReference type="Proteomes" id="UP000007966">
    <property type="component" value="Chromosome"/>
</dbReference>
<dbReference type="GO" id="GO:0005829">
    <property type="term" value="C:cytosol"/>
    <property type="evidence" value="ECO:0007669"/>
    <property type="project" value="TreeGrafter"/>
</dbReference>
<dbReference type="GO" id="GO:0003723">
    <property type="term" value="F:RNA binding"/>
    <property type="evidence" value="ECO:0007669"/>
    <property type="project" value="InterPro"/>
</dbReference>
<dbReference type="GO" id="GO:0160150">
    <property type="term" value="F:tRNA pseudouridine(13) synthase activity"/>
    <property type="evidence" value="ECO:0007669"/>
    <property type="project" value="UniProtKB-EC"/>
</dbReference>
<dbReference type="GO" id="GO:0031119">
    <property type="term" value="P:tRNA pseudouridine synthesis"/>
    <property type="evidence" value="ECO:0007669"/>
    <property type="project" value="UniProtKB-UniRule"/>
</dbReference>
<dbReference type="CDD" id="cd02575">
    <property type="entry name" value="PseudoU_synth_EcTruD"/>
    <property type="match status" value="1"/>
</dbReference>
<dbReference type="FunFam" id="3.30.2350.20:FF:000001">
    <property type="entry name" value="tRNA pseudouridine synthase D"/>
    <property type="match status" value="1"/>
</dbReference>
<dbReference type="Gene3D" id="3.30.2350.20">
    <property type="entry name" value="TruD, catalytic domain"/>
    <property type="match status" value="1"/>
</dbReference>
<dbReference type="Gene3D" id="3.30.2340.10">
    <property type="entry name" value="TruD, insertion domain"/>
    <property type="match status" value="1"/>
</dbReference>
<dbReference type="HAMAP" id="MF_01082">
    <property type="entry name" value="TruD"/>
    <property type="match status" value="1"/>
</dbReference>
<dbReference type="InterPro" id="IPR020103">
    <property type="entry name" value="PsdUridine_synth_cat_dom_sf"/>
</dbReference>
<dbReference type="InterPro" id="IPR001656">
    <property type="entry name" value="PsdUridine_synth_TruD"/>
</dbReference>
<dbReference type="InterPro" id="IPR020119">
    <property type="entry name" value="PsdUridine_synth_TruD_CS"/>
</dbReference>
<dbReference type="InterPro" id="IPR011760">
    <property type="entry name" value="PsdUridine_synth_TruD_insert"/>
</dbReference>
<dbReference type="InterPro" id="IPR042214">
    <property type="entry name" value="TruD_catalytic"/>
</dbReference>
<dbReference type="InterPro" id="IPR043165">
    <property type="entry name" value="TruD_insert_sf"/>
</dbReference>
<dbReference type="InterPro" id="IPR050170">
    <property type="entry name" value="TruD_pseudoU_synthase"/>
</dbReference>
<dbReference type="NCBIfam" id="NF002155">
    <property type="entry name" value="PRK00984.1-4"/>
    <property type="match status" value="1"/>
</dbReference>
<dbReference type="NCBIfam" id="TIGR00094">
    <property type="entry name" value="tRNA_TruD_broad"/>
    <property type="match status" value="1"/>
</dbReference>
<dbReference type="PANTHER" id="PTHR47811">
    <property type="entry name" value="TRNA PSEUDOURIDINE SYNTHASE D"/>
    <property type="match status" value="1"/>
</dbReference>
<dbReference type="PANTHER" id="PTHR47811:SF1">
    <property type="entry name" value="TRNA PSEUDOURIDINE SYNTHASE D"/>
    <property type="match status" value="1"/>
</dbReference>
<dbReference type="Pfam" id="PF01142">
    <property type="entry name" value="TruD"/>
    <property type="match status" value="2"/>
</dbReference>
<dbReference type="SUPFAM" id="SSF55120">
    <property type="entry name" value="Pseudouridine synthase"/>
    <property type="match status" value="1"/>
</dbReference>
<dbReference type="PROSITE" id="PS50984">
    <property type="entry name" value="TRUD"/>
    <property type="match status" value="1"/>
</dbReference>
<dbReference type="PROSITE" id="PS01268">
    <property type="entry name" value="UPF0024"/>
    <property type="match status" value="1"/>
</dbReference>
<feature type="chain" id="PRO_0000152498" description="tRNA pseudouridine synthase D">
    <location>
        <begin position="1"/>
        <end position="348"/>
    </location>
</feature>
<feature type="domain" description="TRUD" evidence="1">
    <location>
        <begin position="155"/>
        <end position="303"/>
    </location>
</feature>
<feature type="active site" description="Nucleophile" evidence="1">
    <location>
        <position position="80"/>
    </location>
</feature>
<feature type="binding site" evidence="1">
    <location>
        <position position="27"/>
    </location>
    <ligand>
        <name>substrate</name>
    </ligand>
</feature>
<feature type="binding site" evidence="1">
    <location>
        <position position="129"/>
    </location>
    <ligand>
        <name>substrate</name>
    </ligand>
</feature>
<feature type="binding site" evidence="1">
    <location>
        <position position="329"/>
    </location>
    <ligand>
        <name>substrate</name>
    </ligand>
</feature>
<organism>
    <name type="scientific">Pectobacterium atrosepticum (strain SCRI 1043 / ATCC BAA-672)</name>
    <name type="common">Erwinia carotovora subsp. atroseptica</name>
    <dbReference type="NCBI Taxonomy" id="218491"/>
    <lineage>
        <taxon>Bacteria</taxon>
        <taxon>Pseudomonadati</taxon>
        <taxon>Pseudomonadota</taxon>
        <taxon>Gammaproteobacteria</taxon>
        <taxon>Enterobacterales</taxon>
        <taxon>Pectobacteriaceae</taxon>
        <taxon>Pectobacterium</taxon>
    </lineage>
</organism>
<keyword id="KW-0413">Isomerase</keyword>
<keyword id="KW-1185">Reference proteome</keyword>
<keyword id="KW-0819">tRNA processing</keyword>
<comment type="function">
    <text evidence="1">Responsible for synthesis of pseudouridine from uracil-13 in transfer RNAs.</text>
</comment>
<comment type="catalytic activity">
    <reaction evidence="1">
        <text>uridine(13) in tRNA = pseudouridine(13) in tRNA</text>
        <dbReference type="Rhea" id="RHEA:42540"/>
        <dbReference type="Rhea" id="RHEA-COMP:10105"/>
        <dbReference type="Rhea" id="RHEA-COMP:10106"/>
        <dbReference type="ChEBI" id="CHEBI:65314"/>
        <dbReference type="ChEBI" id="CHEBI:65315"/>
        <dbReference type="EC" id="5.4.99.27"/>
    </reaction>
</comment>
<comment type="similarity">
    <text evidence="1">Belongs to the pseudouridine synthase TruD family.</text>
</comment>